<organism>
    <name type="scientific">Mycobacterium tuberculosis (strain CDC 1551 / Oshkosh)</name>
    <dbReference type="NCBI Taxonomy" id="83331"/>
    <lineage>
        <taxon>Bacteria</taxon>
        <taxon>Bacillati</taxon>
        <taxon>Actinomycetota</taxon>
        <taxon>Actinomycetes</taxon>
        <taxon>Mycobacteriales</taxon>
        <taxon>Mycobacteriaceae</taxon>
        <taxon>Mycobacterium</taxon>
        <taxon>Mycobacterium tuberculosis complex</taxon>
    </lineage>
</organism>
<proteinExistence type="inferred from homology"/>
<sequence length="584" mass="62841">MVSLSIPSMLRQCVNLHPDGTAFTYIDYERDSEGISESLTWSQVYRRTLNVAAEVRRHAAIGDRAVILAPQGLDYIVAFLGALQAGLIAVPLSAPLGGASDERVDAVVRDAKPNVVLTTSAIMGDVVPRVTPPPGIASPPTVAVDQLDLDSPIRSNIVDDSLQTTAYLQYTSGSTRTPAGVMITYKNILANFQQMISAYFADTGAVPPLDLFIMSWLPFYHDMGLVLGVCAPIIVGCGAVLTSPVAFLQRPARWLQLMAREGQAFSAAPNFAFELTAAKAIDDDLAGLDLGRIKTILCGSERVHPATLKRFVDRFSRFNLREFAIRPAYGLAEATVYVATSQAGQPPEIRYFEPHELSAGQAKPCATGAGTALVSYPLPQSPIVRIVDPNTNTECPPGTIGEIWVHGDNVAGGYWEKPDETERTFGGALVAPSAGTPVGPWLRTGDSGFVSEDKFFIIGRIKDLLIVYGRNHSPDDIEATIQEITRGRCAAIAVPSNGVEKLVAIVELNNRGNLDTERLSFVTREVTSAISTSHGLSVSDLVLVAPGSIPITTSGKVRRAECVKLYRHNEFTRLDAKPLQASDL</sequence>
<comment type="function">
    <text evidence="1">Catalyzes the activation of long-chain fatty acids as acyl-adenylates (acyl-AMP), which are then transferred to the multifunctional polyketide synthase (PKS) type III for further chain extension. Involved in the biosynthesis of sulfolipid 1 (SL-1).</text>
</comment>
<comment type="catalytic activity">
    <reaction evidence="1">
        <text>holo-[(hydroxy)phthioceranic acid synthase] + hexadecanoate + ATP = hexadecanoyl-[(hydroxy)phthioceranic acid synthase] + AMP + diphosphate</text>
        <dbReference type="Rhea" id="RHEA:59164"/>
        <dbReference type="Rhea" id="RHEA-COMP:15244"/>
        <dbReference type="Rhea" id="RHEA-COMP:15305"/>
        <dbReference type="ChEBI" id="CHEBI:7896"/>
        <dbReference type="ChEBI" id="CHEBI:30616"/>
        <dbReference type="ChEBI" id="CHEBI:33019"/>
        <dbReference type="ChEBI" id="CHEBI:64479"/>
        <dbReference type="ChEBI" id="CHEBI:78483"/>
        <dbReference type="ChEBI" id="CHEBI:456215"/>
        <dbReference type="EC" id="6.2.1.57"/>
    </reaction>
</comment>
<comment type="catalytic activity">
    <reaction evidence="1">
        <text>holo-[(hydroxy)phthioceranic acid synthase] + octadecanoate + ATP = octadecanoyl-[(hydroxy)phthioceranic acid synthase] + AMP + diphosphate</text>
        <dbReference type="Rhea" id="RHEA:59168"/>
        <dbReference type="Rhea" id="RHEA-COMP:15305"/>
        <dbReference type="Rhea" id="RHEA-COMP:15306"/>
        <dbReference type="ChEBI" id="CHEBI:25629"/>
        <dbReference type="ChEBI" id="CHEBI:30616"/>
        <dbReference type="ChEBI" id="CHEBI:33019"/>
        <dbReference type="ChEBI" id="CHEBI:64479"/>
        <dbReference type="ChEBI" id="CHEBI:78495"/>
        <dbReference type="ChEBI" id="CHEBI:456215"/>
        <dbReference type="EC" id="6.2.1.57"/>
    </reaction>
</comment>
<comment type="pathway">
    <text evidence="1">Lipid metabolism; fatty acid biosynthesis.</text>
</comment>
<comment type="subcellular location">
    <subcellularLocation>
        <location evidence="2">Membrane</location>
        <topology evidence="2">Multi-pass membrane protein</topology>
    </subcellularLocation>
</comment>
<comment type="similarity">
    <text evidence="3">Belongs to the ATP-dependent AMP-binding enzyme family.</text>
</comment>
<reference key="1">
    <citation type="journal article" date="2002" name="J. Bacteriol.">
        <title>Whole-genome comparison of Mycobacterium tuberculosis clinical and laboratory strains.</title>
        <authorList>
            <person name="Fleischmann R.D."/>
            <person name="Alland D."/>
            <person name="Eisen J.A."/>
            <person name="Carpenter L."/>
            <person name="White O."/>
            <person name="Peterson J.D."/>
            <person name="DeBoy R.T."/>
            <person name="Dodson R.J."/>
            <person name="Gwinn M.L."/>
            <person name="Haft D.H."/>
            <person name="Hickey E.K."/>
            <person name="Kolonay J.F."/>
            <person name="Nelson W.C."/>
            <person name="Umayam L.A."/>
            <person name="Ermolaeva M.D."/>
            <person name="Salzberg S.L."/>
            <person name="Delcher A."/>
            <person name="Utterback T.R."/>
            <person name="Weidman J.F."/>
            <person name="Khouri H.M."/>
            <person name="Gill J."/>
            <person name="Mikula A."/>
            <person name="Bishai W."/>
            <person name="Jacobs W.R. Jr."/>
            <person name="Venter J.C."/>
            <person name="Fraser C.M."/>
        </authorList>
    </citation>
    <scope>NUCLEOTIDE SEQUENCE [LARGE SCALE GENOMIC DNA]</scope>
    <source>
        <strain>CDC 1551 / Oshkosh</strain>
    </source>
</reference>
<feature type="chain" id="PRO_0000426839" description="Long-chain-fatty-acid--AMP ligase FadD23">
    <location>
        <begin position="1"/>
        <end position="584"/>
    </location>
</feature>
<feature type="transmembrane region" description="Helical" evidence="2">
    <location>
        <begin position="199"/>
        <end position="219"/>
    </location>
</feature>
<feature type="transmembrane region" description="Helical" evidence="2">
    <location>
        <begin position="225"/>
        <end position="245"/>
    </location>
</feature>
<evidence type="ECO:0000250" key="1">
    <source>
        <dbReference type="UniProtKB" id="P9WQ47"/>
    </source>
</evidence>
<evidence type="ECO:0000255" key="2"/>
<evidence type="ECO:0000305" key="3"/>
<accession>P9WQ46</accession>
<accession>L0TGV3</accession>
<accession>O07797</accession>
<accession>Q7D4S9</accession>
<dbReference type="EC" id="6.2.1.57" evidence="1"/>
<dbReference type="EMBL" id="AE000516">
    <property type="protein sequence ID" value="AAK48301.1"/>
    <property type="molecule type" value="Genomic_DNA"/>
</dbReference>
<dbReference type="PIR" id="F70522">
    <property type="entry name" value="F70522"/>
</dbReference>
<dbReference type="RefSeq" id="WP_003899713.1">
    <property type="nucleotide sequence ID" value="NZ_KK341227.1"/>
</dbReference>
<dbReference type="SMR" id="P9WQ46"/>
<dbReference type="KEGG" id="mtc:MT3934"/>
<dbReference type="PATRIC" id="fig|83331.31.peg.4232"/>
<dbReference type="HOGENOM" id="CLU_000022_23_7_11"/>
<dbReference type="UniPathway" id="UPA00094"/>
<dbReference type="Proteomes" id="UP000001020">
    <property type="component" value="Chromosome"/>
</dbReference>
<dbReference type="GO" id="GO:0005886">
    <property type="term" value="C:plasma membrane"/>
    <property type="evidence" value="ECO:0007669"/>
    <property type="project" value="TreeGrafter"/>
</dbReference>
<dbReference type="GO" id="GO:0070566">
    <property type="term" value="F:adenylyltransferase activity"/>
    <property type="evidence" value="ECO:0007669"/>
    <property type="project" value="TreeGrafter"/>
</dbReference>
<dbReference type="GO" id="GO:0005524">
    <property type="term" value="F:ATP binding"/>
    <property type="evidence" value="ECO:0007669"/>
    <property type="project" value="UniProtKB-KW"/>
</dbReference>
<dbReference type="GO" id="GO:0016874">
    <property type="term" value="F:ligase activity"/>
    <property type="evidence" value="ECO:0007669"/>
    <property type="project" value="UniProtKB-KW"/>
</dbReference>
<dbReference type="GO" id="GO:0071766">
    <property type="term" value="P:Actinobacterium-type cell wall biogenesis"/>
    <property type="evidence" value="ECO:0007669"/>
    <property type="project" value="UniProtKB-ARBA"/>
</dbReference>
<dbReference type="GO" id="GO:0006633">
    <property type="term" value="P:fatty acid biosynthetic process"/>
    <property type="evidence" value="ECO:0007669"/>
    <property type="project" value="UniProtKB-UniPathway"/>
</dbReference>
<dbReference type="CDD" id="cd05931">
    <property type="entry name" value="FAAL"/>
    <property type="match status" value="1"/>
</dbReference>
<dbReference type="FunFam" id="3.30.300.30:FF:000016">
    <property type="entry name" value="Fatty-acid-CoA ligase FadD26"/>
    <property type="match status" value="1"/>
</dbReference>
<dbReference type="FunFam" id="3.40.50.12780:FF:000013">
    <property type="entry name" value="Long-chain-fatty-acid--AMP ligase FadD32"/>
    <property type="match status" value="1"/>
</dbReference>
<dbReference type="Gene3D" id="3.30.300.30">
    <property type="match status" value="1"/>
</dbReference>
<dbReference type="Gene3D" id="3.40.50.12780">
    <property type="entry name" value="N-terminal domain of ligase-like"/>
    <property type="match status" value="1"/>
</dbReference>
<dbReference type="InterPro" id="IPR025110">
    <property type="entry name" value="AMP-bd_C"/>
</dbReference>
<dbReference type="InterPro" id="IPR045851">
    <property type="entry name" value="AMP-bd_C_sf"/>
</dbReference>
<dbReference type="InterPro" id="IPR000873">
    <property type="entry name" value="AMP-dep_synth/lig_dom"/>
</dbReference>
<dbReference type="InterPro" id="IPR042099">
    <property type="entry name" value="ANL_N_sf"/>
</dbReference>
<dbReference type="InterPro" id="IPR040097">
    <property type="entry name" value="FAAL/FAAC"/>
</dbReference>
<dbReference type="NCBIfam" id="NF004509">
    <property type="entry name" value="PRK05850.1"/>
    <property type="match status" value="1"/>
</dbReference>
<dbReference type="PANTHER" id="PTHR22754:SF32">
    <property type="entry name" value="DISCO-INTERACTING PROTEIN 2"/>
    <property type="match status" value="1"/>
</dbReference>
<dbReference type="PANTHER" id="PTHR22754">
    <property type="entry name" value="DISCO-INTERACTING PROTEIN 2 DIP2 -RELATED"/>
    <property type="match status" value="1"/>
</dbReference>
<dbReference type="Pfam" id="PF00501">
    <property type="entry name" value="AMP-binding"/>
    <property type="match status" value="1"/>
</dbReference>
<dbReference type="Pfam" id="PF23024">
    <property type="entry name" value="AMP-dom_DIP2-like"/>
    <property type="match status" value="1"/>
</dbReference>
<dbReference type="SUPFAM" id="SSF56801">
    <property type="entry name" value="Acetyl-CoA synthetase-like"/>
    <property type="match status" value="1"/>
</dbReference>
<protein>
    <recommendedName>
        <fullName evidence="1">Long-chain-fatty-acid--AMP ligase FadD23</fullName>
        <ecNumber evidence="1">6.2.1.57</ecNumber>
    </recommendedName>
    <alternativeName>
        <fullName evidence="1">Long-chain fatty acid adenylyltransferase FadD23</fullName>
    </alternativeName>
    <alternativeName>
        <fullName evidence="1">Long-chain-fatty-acid adenylase/transferase FadD23</fullName>
    </alternativeName>
</protein>
<keyword id="KW-0067">ATP-binding</keyword>
<keyword id="KW-0276">Fatty acid metabolism</keyword>
<keyword id="KW-0436">Ligase</keyword>
<keyword id="KW-0443">Lipid metabolism</keyword>
<keyword id="KW-0472">Membrane</keyword>
<keyword id="KW-0547">Nucleotide-binding</keyword>
<keyword id="KW-1185">Reference proteome</keyword>
<keyword id="KW-0812">Transmembrane</keyword>
<keyword id="KW-1133">Transmembrane helix</keyword>
<name>FAA23_MYCTO</name>
<gene>
    <name type="primary">fadD23</name>
    <name type="ordered locus">MT3934</name>
</gene>